<comment type="function">
    <text>Probable thiol-disulfide oxidoreductase that may participate in various redox reactions.</text>
</comment>
<comment type="subcellular location">
    <subcellularLocation>
        <location evidence="4">Plastid</location>
        <location evidence="4">Chloroplast</location>
    </subcellularLocation>
</comment>
<comment type="similarity">
    <text evidence="4">Belongs to the thioredoxin family. Plant Y-type subfamily.</text>
</comment>
<comment type="sequence caution" evidence="4">
    <conflict type="erroneous gene model prediction">
        <sequence resource="EMBL-CDS" id="BAD87235"/>
    </conflict>
</comment>
<comment type="sequence caution" evidence="4">
    <conflict type="erroneous gene model prediction">
        <sequence resource="EMBL-CDS" id="BAF07400"/>
    </conflict>
</comment>
<keyword id="KW-0150">Chloroplast</keyword>
<keyword id="KW-1015">Disulfide bond</keyword>
<keyword id="KW-0249">Electron transport</keyword>
<keyword id="KW-0934">Plastid</keyword>
<keyword id="KW-0676">Redox-active center</keyword>
<keyword id="KW-1185">Reference proteome</keyword>
<keyword id="KW-0809">Transit peptide</keyword>
<keyword id="KW-0813">Transport</keyword>
<gene>
    <name type="ordered locus">Os01g0963400</name>
    <name type="ordered locus">LOC_Os01g73234</name>
    <name type="ORF">P0483G10.36</name>
</gene>
<proteinExistence type="inferred from homology"/>
<dbReference type="EMBL" id="AP003263">
    <property type="protein sequence ID" value="BAD87235.1"/>
    <property type="status" value="ALT_SEQ"/>
    <property type="molecule type" value="Genomic_DNA"/>
</dbReference>
<dbReference type="EMBL" id="AP008207">
    <property type="protein sequence ID" value="BAF07400.1"/>
    <property type="status" value="ALT_SEQ"/>
    <property type="molecule type" value="Genomic_DNA"/>
</dbReference>
<dbReference type="EMBL" id="AP014957">
    <property type="status" value="NOT_ANNOTATED_CDS"/>
    <property type="molecule type" value="Genomic_DNA"/>
</dbReference>
<dbReference type="RefSeq" id="XP_015622287.1">
    <property type="nucleotide sequence ID" value="XM_015766801.1"/>
</dbReference>
<dbReference type="SMR" id="Q5JMR9"/>
<dbReference type="FunCoup" id="Q5JMR9">
    <property type="interactions" value="339"/>
</dbReference>
<dbReference type="STRING" id="39947.Q5JMR9"/>
<dbReference type="PaxDb" id="39947-Q5JMR9"/>
<dbReference type="KEGG" id="dosa:Os01g0963400"/>
<dbReference type="KEGG" id="osa:4324458"/>
<dbReference type="eggNOG" id="KOG0910">
    <property type="taxonomic scope" value="Eukaryota"/>
</dbReference>
<dbReference type="HOGENOM" id="CLU_090389_10_4_1"/>
<dbReference type="InParanoid" id="Q5JMR9"/>
<dbReference type="OrthoDB" id="2121326at2759"/>
<dbReference type="Proteomes" id="UP000000763">
    <property type="component" value="Chromosome 1"/>
</dbReference>
<dbReference type="Proteomes" id="UP000059680">
    <property type="component" value="Chromosome 1"/>
</dbReference>
<dbReference type="GO" id="GO:0009507">
    <property type="term" value="C:chloroplast"/>
    <property type="evidence" value="ECO:0007669"/>
    <property type="project" value="UniProtKB-SubCell"/>
</dbReference>
<dbReference type="GO" id="GO:0005737">
    <property type="term" value="C:cytoplasm"/>
    <property type="evidence" value="ECO:0000318"/>
    <property type="project" value="GO_Central"/>
</dbReference>
<dbReference type="GO" id="GO:0015035">
    <property type="term" value="F:protein-disulfide reductase activity"/>
    <property type="evidence" value="ECO:0000318"/>
    <property type="project" value="GO_Central"/>
</dbReference>
<dbReference type="CDD" id="cd02947">
    <property type="entry name" value="TRX_family"/>
    <property type="match status" value="1"/>
</dbReference>
<dbReference type="FunFam" id="3.40.30.10:FF:000001">
    <property type="entry name" value="Thioredoxin"/>
    <property type="match status" value="1"/>
</dbReference>
<dbReference type="Gene3D" id="3.40.30.10">
    <property type="entry name" value="Glutaredoxin"/>
    <property type="match status" value="1"/>
</dbReference>
<dbReference type="InterPro" id="IPR005746">
    <property type="entry name" value="Thioredoxin"/>
</dbReference>
<dbReference type="InterPro" id="IPR036249">
    <property type="entry name" value="Thioredoxin-like_sf"/>
</dbReference>
<dbReference type="InterPro" id="IPR017937">
    <property type="entry name" value="Thioredoxin_CS"/>
</dbReference>
<dbReference type="InterPro" id="IPR013766">
    <property type="entry name" value="Thioredoxin_domain"/>
</dbReference>
<dbReference type="NCBIfam" id="TIGR01068">
    <property type="entry name" value="thioredoxin"/>
    <property type="match status" value="1"/>
</dbReference>
<dbReference type="PANTHER" id="PTHR45663">
    <property type="entry name" value="GEO12009P1"/>
    <property type="match status" value="1"/>
</dbReference>
<dbReference type="PANTHER" id="PTHR45663:SF15">
    <property type="entry name" value="THIOREDOXIN Y1, CHLOROPLASTIC"/>
    <property type="match status" value="1"/>
</dbReference>
<dbReference type="Pfam" id="PF00085">
    <property type="entry name" value="Thioredoxin"/>
    <property type="match status" value="1"/>
</dbReference>
<dbReference type="PRINTS" id="PR00421">
    <property type="entry name" value="THIOREDOXIN"/>
</dbReference>
<dbReference type="SUPFAM" id="SSF52833">
    <property type="entry name" value="Thioredoxin-like"/>
    <property type="match status" value="1"/>
</dbReference>
<dbReference type="PROSITE" id="PS00194">
    <property type="entry name" value="THIOREDOXIN_1"/>
    <property type="match status" value="1"/>
</dbReference>
<dbReference type="PROSITE" id="PS51352">
    <property type="entry name" value="THIOREDOXIN_2"/>
    <property type="match status" value="1"/>
</dbReference>
<protein>
    <recommendedName>
        <fullName>Thioredoxin Y, chloroplastic</fullName>
        <shortName>OsTrxy</shortName>
    </recommendedName>
</protein>
<evidence type="ECO:0000250" key="1"/>
<evidence type="ECO:0000255" key="2"/>
<evidence type="ECO:0000255" key="3">
    <source>
        <dbReference type="PROSITE-ProRule" id="PRU00691"/>
    </source>
</evidence>
<evidence type="ECO:0000305" key="4"/>
<accession>Q5JMR9</accession>
<accession>Q0JFS8</accession>
<reference key="1">
    <citation type="journal article" date="2002" name="Nature">
        <title>The genome sequence and structure of rice chromosome 1.</title>
        <authorList>
            <person name="Sasaki T."/>
            <person name="Matsumoto T."/>
            <person name="Yamamoto K."/>
            <person name="Sakata K."/>
            <person name="Baba T."/>
            <person name="Katayose Y."/>
            <person name="Wu J."/>
            <person name="Niimura Y."/>
            <person name="Cheng Z."/>
            <person name="Nagamura Y."/>
            <person name="Antonio B.A."/>
            <person name="Kanamori H."/>
            <person name="Hosokawa S."/>
            <person name="Masukawa M."/>
            <person name="Arikawa K."/>
            <person name="Chiden Y."/>
            <person name="Hayashi M."/>
            <person name="Okamoto M."/>
            <person name="Ando T."/>
            <person name="Aoki H."/>
            <person name="Arita K."/>
            <person name="Hamada M."/>
            <person name="Harada C."/>
            <person name="Hijishita S."/>
            <person name="Honda M."/>
            <person name="Ichikawa Y."/>
            <person name="Idonuma A."/>
            <person name="Iijima M."/>
            <person name="Ikeda M."/>
            <person name="Ikeno M."/>
            <person name="Ito S."/>
            <person name="Ito T."/>
            <person name="Ito Y."/>
            <person name="Ito Y."/>
            <person name="Iwabuchi A."/>
            <person name="Kamiya K."/>
            <person name="Karasawa W."/>
            <person name="Katagiri S."/>
            <person name="Kikuta A."/>
            <person name="Kobayashi N."/>
            <person name="Kono I."/>
            <person name="Machita K."/>
            <person name="Maehara T."/>
            <person name="Mizuno H."/>
            <person name="Mizubayashi T."/>
            <person name="Mukai Y."/>
            <person name="Nagasaki H."/>
            <person name="Nakashima M."/>
            <person name="Nakama Y."/>
            <person name="Nakamichi Y."/>
            <person name="Nakamura M."/>
            <person name="Namiki N."/>
            <person name="Negishi M."/>
            <person name="Ohta I."/>
            <person name="Ono N."/>
            <person name="Saji S."/>
            <person name="Sakai K."/>
            <person name="Shibata M."/>
            <person name="Shimokawa T."/>
            <person name="Shomura A."/>
            <person name="Song J."/>
            <person name="Takazaki Y."/>
            <person name="Terasawa K."/>
            <person name="Tsuji K."/>
            <person name="Waki K."/>
            <person name="Yamagata H."/>
            <person name="Yamane H."/>
            <person name="Yoshiki S."/>
            <person name="Yoshihara R."/>
            <person name="Yukawa K."/>
            <person name="Zhong H."/>
            <person name="Iwama H."/>
            <person name="Endo T."/>
            <person name="Ito H."/>
            <person name="Hahn J.H."/>
            <person name="Kim H.-I."/>
            <person name="Eun M.-Y."/>
            <person name="Yano M."/>
            <person name="Jiang J."/>
            <person name="Gojobori T."/>
        </authorList>
    </citation>
    <scope>NUCLEOTIDE SEQUENCE [LARGE SCALE GENOMIC DNA]</scope>
    <source>
        <strain>cv. Nipponbare</strain>
    </source>
</reference>
<reference key="2">
    <citation type="journal article" date="2005" name="Nature">
        <title>The map-based sequence of the rice genome.</title>
        <authorList>
            <consortium name="International rice genome sequencing project (IRGSP)"/>
        </authorList>
    </citation>
    <scope>NUCLEOTIDE SEQUENCE [LARGE SCALE GENOMIC DNA]</scope>
    <source>
        <strain>cv. Nipponbare</strain>
    </source>
</reference>
<reference key="3">
    <citation type="journal article" date="2008" name="Nucleic Acids Res.">
        <title>The rice annotation project database (RAP-DB): 2008 update.</title>
        <authorList>
            <consortium name="The rice annotation project (RAP)"/>
        </authorList>
    </citation>
    <scope>GENOME REANNOTATION</scope>
    <source>
        <strain>cv. Nipponbare</strain>
    </source>
</reference>
<reference key="4">
    <citation type="journal article" date="2013" name="Rice">
        <title>Improvement of the Oryza sativa Nipponbare reference genome using next generation sequence and optical map data.</title>
        <authorList>
            <person name="Kawahara Y."/>
            <person name="de la Bastide M."/>
            <person name="Hamilton J.P."/>
            <person name="Kanamori H."/>
            <person name="McCombie W.R."/>
            <person name="Ouyang S."/>
            <person name="Schwartz D.C."/>
            <person name="Tanaka T."/>
            <person name="Wu J."/>
            <person name="Zhou S."/>
            <person name="Childs K.L."/>
            <person name="Davidson R.M."/>
            <person name="Lin H."/>
            <person name="Quesada-Ocampo L."/>
            <person name="Vaillancourt B."/>
            <person name="Sakai H."/>
            <person name="Lee S.S."/>
            <person name="Kim J."/>
            <person name="Numa H."/>
            <person name="Itoh T."/>
            <person name="Buell C.R."/>
            <person name="Matsumoto T."/>
        </authorList>
    </citation>
    <scope>GENOME REANNOTATION</scope>
    <source>
        <strain>cv. Nipponbare</strain>
    </source>
</reference>
<reference key="5">
    <citation type="journal article" date="2009" name="Mol. Plant">
        <title>Comparative genomic study of the thioredoxin family in photosynthetic organisms with emphasis on Populus trichocarpa.</title>
        <authorList>
            <person name="Chibani K."/>
            <person name="Wingsle G."/>
            <person name="Jacquot J.P."/>
            <person name="Gelhaye E."/>
            <person name="Rouhier N."/>
        </authorList>
    </citation>
    <scope>GENE FAMILY</scope>
    <scope>NOMENCLATURE</scope>
</reference>
<name>TRXY_ORYSJ</name>
<organism>
    <name type="scientific">Oryza sativa subsp. japonica</name>
    <name type="common">Rice</name>
    <dbReference type="NCBI Taxonomy" id="39947"/>
    <lineage>
        <taxon>Eukaryota</taxon>
        <taxon>Viridiplantae</taxon>
        <taxon>Streptophyta</taxon>
        <taxon>Embryophyta</taxon>
        <taxon>Tracheophyta</taxon>
        <taxon>Spermatophyta</taxon>
        <taxon>Magnoliopsida</taxon>
        <taxon>Liliopsida</taxon>
        <taxon>Poales</taxon>
        <taxon>Poaceae</taxon>
        <taxon>BOP clade</taxon>
        <taxon>Oryzoideae</taxon>
        <taxon>Oryzeae</taxon>
        <taxon>Oryzinae</taxon>
        <taxon>Oryza</taxon>
        <taxon>Oryza sativa</taxon>
    </lineage>
</organism>
<sequence length="168" mass="18181">MAAFTSTTTAAAASPTPCRPAALVARSSAAPLRSAAPVVVAAGLRRAAAPSRRGATLRVQAKKQTFSSFDELLEKSEKPVLVDFYATWCGPCQYMVPILQEVSEKLGDKIQVVKIDTEKYTSIANRYQIEALPTFIIFKNGKPCHRFEGALPANQLIQQIESALEVAK</sequence>
<feature type="transit peptide" description="Chloroplast" evidence="2">
    <location>
        <begin position="1"/>
        <end position="58"/>
    </location>
</feature>
<feature type="chain" id="PRO_0000394836" description="Thioredoxin Y, chloroplastic">
    <location>
        <begin position="59"/>
        <end position="168"/>
    </location>
</feature>
<feature type="domain" description="Thioredoxin" evidence="3">
    <location>
        <begin position="59"/>
        <end position="165"/>
    </location>
</feature>
<feature type="active site" description="Nucleophile" evidence="1">
    <location>
        <position position="89"/>
    </location>
</feature>
<feature type="active site" description="Nucleophile" evidence="1">
    <location>
        <position position="92"/>
    </location>
</feature>
<feature type="site" description="Deprotonates C-terminal active site Cys" evidence="1">
    <location>
        <position position="83"/>
    </location>
</feature>
<feature type="site" description="Contributes to redox potential value" evidence="1">
    <location>
        <position position="90"/>
    </location>
</feature>
<feature type="site" description="Contributes to redox potential value" evidence="1">
    <location>
        <position position="91"/>
    </location>
</feature>
<feature type="disulfide bond" description="Redox-active" evidence="3">
    <location>
        <begin position="89"/>
        <end position="92"/>
    </location>
</feature>